<feature type="chain" id="PRO_0000212899" description="Palmitoyltransferase ZDHHC16">
    <location>
        <begin position="1"/>
        <end position="361"/>
    </location>
</feature>
<feature type="topological domain" description="Cytoplasmic" evidence="4">
    <location>
        <begin position="1"/>
        <end position="77"/>
    </location>
</feature>
<feature type="transmembrane region" description="Helical" evidence="4">
    <location>
        <begin position="78"/>
        <end position="98"/>
    </location>
</feature>
<feature type="topological domain" description="Lumenal" evidence="4">
    <location>
        <begin position="99"/>
        <end position="116"/>
    </location>
</feature>
<feature type="transmembrane region" description="Helical" evidence="4">
    <location>
        <begin position="117"/>
        <end position="137"/>
    </location>
</feature>
<feature type="topological domain" description="Cytoplasmic" evidence="4">
    <location>
        <begin position="138"/>
        <end position="198"/>
    </location>
</feature>
<feature type="transmembrane region" description="Helical" evidence="4">
    <location>
        <begin position="199"/>
        <end position="219"/>
    </location>
</feature>
<feature type="topological domain" description="Lumenal" evidence="4">
    <location>
        <begin position="220"/>
        <end position="250"/>
    </location>
</feature>
<feature type="transmembrane region" description="Helical" evidence="4">
    <location>
        <begin position="251"/>
        <end position="271"/>
    </location>
</feature>
<feature type="topological domain" description="Cytoplasmic" evidence="4">
    <location>
        <begin position="272"/>
        <end position="361"/>
    </location>
</feature>
<feature type="domain" description="DHHC" evidence="5">
    <location>
        <begin position="155"/>
        <end position="205"/>
    </location>
</feature>
<feature type="active site" description="S-palmitoyl cysteine intermediate" evidence="2">
    <location>
        <position position="185"/>
    </location>
</feature>
<feature type="sequence conflict" description="In Ref. 2; BAE40024." evidence="10" ref="2">
    <original>R</original>
    <variation>Q</variation>
    <location>
        <position position="33"/>
    </location>
</feature>
<feature type="sequence conflict" description="In Ref. 1; AAG09269." evidence="10" ref="1">
    <original>A</original>
    <variation>S</variation>
    <location>
        <position position="63"/>
    </location>
</feature>
<feature type="sequence conflict" description="In Ref. 3; AAH10835." evidence="10" ref="3">
    <original>C</original>
    <variation>R</variation>
    <location>
        <position position="171"/>
    </location>
</feature>
<feature type="sequence conflict" description="In Ref. 1; AAG09269." evidence="10" ref="1">
    <original>S</original>
    <variation>N</variation>
    <location>
        <position position="335"/>
    </location>
</feature>
<dbReference type="EC" id="2.3.1.225" evidence="7"/>
<dbReference type="EMBL" id="AF176814">
    <property type="protein sequence ID" value="AAG09269.1"/>
    <property type="molecule type" value="mRNA"/>
</dbReference>
<dbReference type="EMBL" id="AK151505">
    <property type="protein sequence ID" value="BAE30456.1"/>
    <property type="molecule type" value="mRNA"/>
</dbReference>
<dbReference type="EMBL" id="AK168042">
    <property type="protein sequence ID" value="BAE40024.1"/>
    <property type="molecule type" value="mRNA"/>
</dbReference>
<dbReference type="EMBL" id="BC010835">
    <property type="protein sequence ID" value="AAH10835.1"/>
    <property type="molecule type" value="mRNA"/>
</dbReference>
<dbReference type="CCDS" id="CCDS29817.1"/>
<dbReference type="RefSeq" id="NP_076229.2">
    <property type="nucleotide sequence ID" value="NM_023740.3"/>
</dbReference>
<dbReference type="SMR" id="Q9ESG8"/>
<dbReference type="BioGRID" id="216543">
    <property type="interactions" value="1"/>
</dbReference>
<dbReference type="FunCoup" id="Q9ESG8">
    <property type="interactions" value="3002"/>
</dbReference>
<dbReference type="IntAct" id="Q9ESG8">
    <property type="interactions" value="1"/>
</dbReference>
<dbReference type="STRING" id="10090.ENSMUSP00000026154"/>
<dbReference type="PhosphoSitePlus" id="Q9ESG8"/>
<dbReference type="SwissPalm" id="Q9ESG8"/>
<dbReference type="PaxDb" id="10090-ENSMUSP00000026154"/>
<dbReference type="ProteomicsDB" id="275137"/>
<dbReference type="Antibodypedia" id="30898">
    <property type="antibodies" value="123 antibodies from 19 providers"/>
</dbReference>
<dbReference type="Ensembl" id="ENSMUST00000026154.9">
    <property type="protein sequence ID" value="ENSMUSP00000026154.8"/>
    <property type="gene ID" value="ENSMUSG00000025157.9"/>
</dbReference>
<dbReference type="GeneID" id="74168"/>
<dbReference type="KEGG" id="mmu:74168"/>
<dbReference type="UCSC" id="uc008hmq.2">
    <property type="organism name" value="mouse"/>
</dbReference>
<dbReference type="AGR" id="MGI:1921418"/>
<dbReference type="CTD" id="84287"/>
<dbReference type="MGI" id="MGI:1921418">
    <property type="gene designation" value="Zdhhc16"/>
</dbReference>
<dbReference type="VEuPathDB" id="HostDB:ENSMUSG00000025157"/>
<dbReference type="eggNOG" id="KOG1313">
    <property type="taxonomic scope" value="Eukaryota"/>
</dbReference>
<dbReference type="GeneTree" id="ENSGT00940000155032"/>
<dbReference type="HOGENOM" id="CLU_054274_0_0_1"/>
<dbReference type="InParanoid" id="Q9ESG8"/>
<dbReference type="OMA" id="DGIVWDC"/>
<dbReference type="OrthoDB" id="331948at2759"/>
<dbReference type="PhylomeDB" id="Q9ESG8"/>
<dbReference type="TreeFam" id="TF320809"/>
<dbReference type="BioGRID-ORCS" id="74168">
    <property type="hits" value="4 hits in 76 CRISPR screens"/>
</dbReference>
<dbReference type="ChiTaRS" id="Zdhhc16">
    <property type="organism name" value="mouse"/>
</dbReference>
<dbReference type="PRO" id="PR:Q9ESG8"/>
<dbReference type="Proteomes" id="UP000000589">
    <property type="component" value="Chromosome 19"/>
</dbReference>
<dbReference type="RNAct" id="Q9ESG8">
    <property type="molecule type" value="protein"/>
</dbReference>
<dbReference type="Bgee" id="ENSMUSG00000025157">
    <property type="expression patterns" value="Expressed in embryonic brain and 270 other cell types or tissues"/>
</dbReference>
<dbReference type="ExpressionAtlas" id="Q9ESG8">
    <property type="expression patterns" value="baseline and differential"/>
</dbReference>
<dbReference type="GO" id="GO:0005789">
    <property type="term" value="C:endoplasmic reticulum membrane"/>
    <property type="evidence" value="ECO:0007669"/>
    <property type="project" value="UniProtKB-SubCell"/>
</dbReference>
<dbReference type="GO" id="GO:0016409">
    <property type="term" value="F:palmitoyltransferase activity"/>
    <property type="evidence" value="ECO:0000314"/>
    <property type="project" value="UniProtKB"/>
</dbReference>
<dbReference type="GO" id="GO:0019706">
    <property type="term" value="F:protein-cysteine S-palmitoyltransferase activity"/>
    <property type="evidence" value="ECO:0007669"/>
    <property type="project" value="UniProtKB-EC"/>
</dbReference>
<dbReference type="GO" id="GO:0006915">
    <property type="term" value="P:apoptotic process"/>
    <property type="evidence" value="ECO:0007669"/>
    <property type="project" value="UniProtKB-KW"/>
</dbReference>
<dbReference type="GO" id="GO:0006974">
    <property type="term" value="P:DNA damage response"/>
    <property type="evidence" value="ECO:0000315"/>
    <property type="project" value="UniProtKB"/>
</dbReference>
<dbReference type="GO" id="GO:0001654">
    <property type="term" value="P:eye development"/>
    <property type="evidence" value="ECO:0000315"/>
    <property type="project" value="UniProtKB"/>
</dbReference>
<dbReference type="GO" id="GO:0007507">
    <property type="term" value="P:heart development"/>
    <property type="evidence" value="ECO:0000315"/>
    <property type="project" value="UniProtKB"/>
</dbReference>
<dbReference type="GO" id="GO:0018345">
    <property type="term" value="P:protein palmitoylation"/>
    <property type="evidence" value="ECO:0000314"/>
    <property type="project" value="UniProtKB"/>
</dbReference>
<dbReference type="GO" id="GO:0021537">
    <property type="term" value="P:telencephalon development"/>
    <property type="evidence" value="ECO:0000250"/>
    <property type="project" value="UniProtKB"/>
</dbReference>
<dbReference type="InterPro" id="IPR001594">
    <property type="entry name" value="Palmitoyltrfase_DHHC"/>
</dbReference>
<dbReference type="InterPro" id="IPR039859">
    <property type="entry name" value="PFA4/ZDH16/20/ERF2-like"/>
</dbReference>
<dbReference type="PANTHER" id="PTHR12246">
    <property type="entry name" value="PALMITOYLTRANSFERASE ZDHHC16"/>
    <property type="match status" value="1"/>
</dbReference>
<dbReference type="Pfam" id="PF01529">
    <property type="entry name" value="DHHC"/>
    <property type="match status" value="1"/>
</dbReference>
<dbReference type="PROSITE" id="PS50216">
    <property type="entry name" value="DHHC"/>
    <property type="match status" value="1"/>
</dbReference>
<organism>
    <name type="scientific">Mus musculus</name>
    <name type="common">Mouse</name>
    <dbReference type="NCBI Taxonomy" id="10090"/>
    <lineage>
        <taxon>Eukaryota</taxon>
        <taxon>Metazoa</taxon>
        <taxon>Chordata</taxon>
        <taxon>Craniata</taxon>
        <taxon>Vertebrata</taxon>
        <taxon>Euteleostomi</taxon>
        <taxon>Mammalia</taxon>
        <taxon>Eutheria</taxon>
        <taxon>Euarchontoglires</taxon>
        <taxon>Glires</taxon>
        <taxon>Rodentia</taxon>
        <taxon>Myomorpha</taxon>
        <taxon>Muroidea</taxon>
        <taxon>Muridae</taxon>
        <taxon>Murinae</taxon>
        <taxon>Mus</taxon>
        <taxon>Mus</taxon>
    </lineage>
</organism>
<sequence length="361" mass="41794">MRGQRSLLLGPARLCLRLLLLLGYRRRCPPLLRGLVQRWRYGKVCLRSLLYNSFGGSDTAVDAAFEPVYWLVDNVIRWFGVVFVVLVIVLTGSIVAIAYLCVLPLILRTYSVPRLCWHFFYSHWNLILIVFHYYQAITTPPGYPPQGRNDIATVSICKKCIYPKPARTHHCSICNRCVLKMDHHCPWLNNCVGHYNHRYFFSFCFFMTLGCVYCSYGSWDLFREAYAAIETYHQTPPPTFSFRERITHKSLVYLWFLCSSVALALGALTMWHAVLISRGETSIERHINKKERRRLQAKGRVFRNPYNYGCLDNWKVFLGVDTGRHWLTRVLLPSSHLPHGNGMSWDPPPWVTAHSASVMAV</sequence>
<protein>
    <recommendedName>
        <fullName evidence="10">Palmitoyltransferase ZDHHC16</fullName>
        <ecNumber evidence="7">2.3.1.225</ecNumber>
    </recommendedName>
    <alternativeName>
        <fullName evidence="9">Abl-philin 2</fullName>
    </alternativeName>
    <alternativeName>
        <fullName>Zinc finger DHHC domain-containing protein 16</fullName>
        <shortName>DHHC-16</shortName>
    </alternativeName>
</protein>
<evidence type="ECO:0000250" key="1">
    <source>
        <dbReference type="UniProtKB" id="B8A4F0"/>
    </source>
</evidence>
<evidence type="ECO:0000250" key="2">
    <source>
        <dbReference type="UniProtKB" id="Q8IUH5"/>
    </source>
</evidence>
<evidence type="ECO:0000250" key="3">
    <source>
        <dbReference type="UniProtKB" id="Q969W1"/>
    </source>
</evidence>
<evidence type="ECO:0000255" key="4"/>
<evidence type="ECO:0000255" key="5">
    <source>
        <dbReference type="PROSITE-ProRule" id="PRU00067"/>
    </source>
</evidence>
<evidence type="ECO:0000269" key="6">
    <source>
    </source>
</evidence>
<evidence type="ECO:0000269" key="7">
    <source>
    </source>
</evidence>
<evidence type="ECO:0000269" key="8">
    <source>
    </source>
</evidence>
<evidence type="ECO:0000303" key="9">
    <source>
    </source>
</evidence>
<evidence type="ECO:0000305" key="10"/>
<evidence type="ECO:0000312" key="11">
    <source>
        <dbReference type="MGI" id="MGI:1921418"/>
    </source>
</evidence>
<reference key="1">
    <citation type="journal article" date="2002" name="J. Biol. Chem.">
        <title>Aph2, a protein with a zf-DHHC motif, interacts with c-Abl and has pro-apoptotic activity.</title>
        <authorList>
            <person name="Li B."/>
            <person name="Cong F."/>
            <person name="Tan C.P."/>
            <person name="Wang S.X."/>
            <person name="Goff S.P."/>
        </authorList>
    </citation>
    <scope>NUCLEOTIDE SEQUENCE [MRNA]</scope>
    <scope>TISSUE SPECIFICITY</scope>
    <scope>INTERACTION WITH ABL1</scope>
    <scope>SUBCELLULAR LOCATION</scope>
    <scope>FUNCTION</scope>
    <source>
        <strain>BALB/cJ</strain>
    </source>
</reference>
<reference key="2">
    <citation type="journal article" date="2005" name="Science">
        <title>The transcriptional landscape of the mammalian genome.</title>
        <authorList>
            <person name="Carninci P."/>
            <person name="Kasukawa T."/>
            <person name="Katayama S."/>
            <person name="Gough J."/>
            <person name="Frith M.C."/>
            <person name="Maeda N."/>
            <person name="Oyama R."/>
            <person name="Ravasi T."/>
            <person name="Lenhard B."/>
            <person name="Wells C."/>
            <person name="Kodzius R."/>
            <person name="Shimokawa K."/>
            <person name="Bajic V.B."/>
            <person name="Brenner S.E."/>
            <person name="Batalov S."/>
            <person name="Forrest A.R."/>
            <person name="Zavolan M."/>
            <person name="Davis M.J."/>
            <person name="Wilming L.G."/>
            <person name="Aidinis V."/>
            <person name="Allen J.E."/>
            <person name="Ambesi-Impiombato A."/>
            <person name="Apweiler R."/>
            <person name="Aturaliya R.N."/>
            <person name="Bailey T.L."/>
            <person name="Bansal M."/>
            <person name="Baxter L."/>
            <person name="Beisel K.W."/>
            <person name="Bersano T."/>
            <person name="Bono H."/>
            <person name="Chalk A.M."/>
            <person name="Chiu K.P."/>
            <person name="Choudhary V."/>
            <person name="Christoffels A."/>
            <person name="Clutterbuck D.R."/>
            <person name="Crowe M.L."/>
            <person name="Dalla E."/>
            <person name="Dalrymple B.P."/>
            <person name="de Bono B."/>
            <person name="Della Gatta G."/>
            <person name="di Bernardo D."/>
            <person name="Down T."/>
            <person name="Engstrom P."/>
            <person name="Fagiolini M."/>
            <person name="Faulkner G."/>
            <person name="Fletcher C.F."/>
            <person name="Fukushima T."/>
            <person name="Furuno M."/>
            <person name="Futaki S."/>
            <person name="Gariboldi M."/>
            <person name="Georgii-Hemming P."/>
            <person name="Gingeras T.R."/>
            <person name="Gojobori T."/>
            <person name="Green R.E."/>
            <person name="Gustincich S."/>
            <person name="Harbers M."/>
            <person name="Hayashi Y."/>
            <person name="Hensch T.K."/>
            <person name="Hirokawa N."/>
            <person name="Hill D."/>
            <person name="Huminiecki L."/>
            <person name="Iacono M."/>
            <person name="Ikeo K."/>
            <person name="Iwama A."/>
            <person name="Ishikawa T."/>
            <person name="Jakt M."/>
            <person name="Kanapin A."/>
            <person name="Katoh M."/>
            <person name="Kawasawa Y."/>
            <person name="Kelso J."/>
            <person name="Kitamura H."/>
            <person name="Kitano H."/>
            <person name="Kollias G."/>
            <person name="Krishnan S.P."/>
            <person name="Kruger A."/>
            <person name="Kummerfeld S.K."/>
            <person name="Kurochkin I.V."/>
            <person name="Lareau L.F."/>
            <person name="Lazarevic D."/>
            <person name="Lipovich L."/>
            <person name="Liu J."/>
            <person name="Liuni S."/>
            <person name="McWilliam S."/>
            <person name="Madan Babu M."/>
            <person name="Madera M."/>
            <person name="Marchionni L."/>
            <person name="Matsuda H."/>
            <person name="Matsuzawa S."/>
            <person name="Miki H."/>
            <person name="Mignone F."/>
            <person name="Miyake S."/>
            <person name="Morris K."/>
            <person name="Mottagui-Tabar S."/>
            <person name="Mulder N."/>
            <person name="Nakano N."/>
            <person name="Nakauchi H."/>
            <person name="Ng P."/>
            <person name="Nilsson R."/>
            <person name="Nishiguchi S."/>
            <person name="Nishikawa S."/>
            <person name="Nori F."/>
            <person name="Ohara O."/>
            <person name="Okazaki Y."/>
            <person name="Orlando V."/>
            <person name="Pang K.C."/>
            <person name="Pavan W.J."/>
            <person name="Pavesi G."/>
            <person name="Pesole G."/>
            <person name="Petrovsky N."/>
            <person name="Piazza S."/>
            <person name="Reed J."/>
            <person name="Reid J.F."/>
            <person name="Ring B.Z."/>
            <person name="Ringwald M."/>
            <person name="Rost B."/>
            <person name="Ruan Y."/>
            <person name="Salzberg S.L."/>
            <person name="Sandelin A."/>
            <person name="Schneider C."/>
            <person name="Schoenbach C."/>
            <person name="Sekiguchi K."/>
            <person name="Semple C.A."/>
            <person name="Seno S."/>
            <person name="Sessa L."/>
            <person name="Sheng Y."/>
            <person name="Shibata Y."/>
            <person name="Shimada H."/>
            <person name="Shimada K."/>
            <person name="Silva D."/>
            <person name="Sinclair B."/>
            <person name="Sperling S."/>
            <person name="Stupka E."/>
            <person name="Sugiura K."/>
            <person name="Sultana R."/>
            <person name="Takenaka Y."/>
            <person name="Taki K."/>
            <person name="Tammoja K."/>
            <person name="Tan S.L."/>
            <person name="Tang S."/>
            <person name="Taylor M.S."/>
            <person name="Tegner J."/>
            <person name="Teichmann S.A."/>
            <person name="Ueda H.R."/>
            <person name="van Nimwegen E."/>
            <person name="Verardo R."/>
            <person name="Wei C.L."/>
            <person name="Yagi K."/>
            <person name="Yamanishi H."/>
            <person name="Zabarovsky E."/>
            <person name="Zhu S."/>
            <person name="Zimmer A."/>
            <person name="Hide W."/>
            <person name="Bult C."/>
            <person name="Grimmond S.M."/>
            <person name="Teasdale R.D."/>
            <person name="Liu E.T."/>
            <person name="Brusic V."/>
            <person name="Quackenbush J."/>
            <person name="Wahlestedt C."/>
            <person name="Mattick J.S."/>
            <person name="Hume D.A."/>
            <person name="Kai C."/>
            <person name="Sasaki D."/>
            <person name="Tomaru Y."/>
            <person name="Fukuda S."/>
            <person name="Kanamori-Katayama M."/>
            <person name="Suzuki M."/>
            <person name="Aoki J."/>
            <person name="Arakawa T."/>
            <person name="Iida J."/>
            <person name="Imamura K."/>
            <person name="Itoh M."/>
            <person name="Kato T."/>
            <person name="Kawaji H."/>
            <person name="Kawagashira N."/>
            <person name="Kawashima T."/>
            <person name="Kojima M."/>
            <person name="Kondo S."/>
            <person name="Konno H."/>
            <person name="Nakano K."/>
            <person name="Ninomiya N."/>
            <person name="Nishio T."/>
            <person name="Okada M."/>
            <person name="Plessy C."/>
            <person name="Shibata K."/>
            <person name="Shiraki T."/>
            <person name="Suzuki S."/>
            <person name="Tagami M."/>
            <person name="Waki K."/>
            <person name="Watahiki A."/>
            <person name="Okamura-Oho Y."/>
            <person name="Suzuki H."/>
            <person name="Kawai J."/>
            <person name="Hayashizaki Y."/>
        </authorList>
    </citation>
    <scope>NUCLEOTIDE SEQUENCE [LARGE SCALE MRNA]</scope>
    <source>
        <strain>C57BL/6J</strain>
        <strain>DBA/2J</strain>
        <tissue>Bone marrow</tissue>
    </source>
</reference>
<reference key="3">
    <citation type="journal article" date="2004" name="Genome Res.">
        <title>The status, quality, and expansion of the NIH full-length cDNA project: the Mammalian Gene Collection (MGC).</title>
        <authorList>
            <consortium name="The MGC Project Team"/>
        </authorList>
    </citation>
    <scope>NUCLEOTIDE SEQUENCE [LARGE SCALE MRNA]</scope>
    <source>
        <tissue>Kidney</tissue>
    </source>
</reference>
<reference key="4">
    <citation type="journal article" date="2015" name="Proc. Natl. Acad. Sci. U.S.A.">
        <title>Palmitoyl acyltransferase Aph2 in cardiac function and the development of cardiomyopathy.</title>
        <authorList>
            <person name="Zhou T."/>
            <person name="Li J."/>
            <person name="Zhao P."/>
            <person name="Liu H."/>
            <person name="Jia D."/>
            <person name="Jia H."/>
            <person name="He L."/>
            <person name="Cang Y."/>
            <person name="Boast S."/>
            <person name="Chen Y.H."/>
            <person name="Thibault H."/>
            <person name="Scherrer-Crosbie M."/>
            <person name="Goff S.P."/>
            <person name="Li B."/>
        </authorList>
    </citation>
    <scope>FUNCTION</scope>
    <scope>DISRUPTION PHENOTYPE</scope>
</reference>
<reference key="5">
    <citation type="journal article" date="2016" name="BMC Mol. Biol.">
        <title>A potential role for protein palmitoylation and zDHHC16 in DNA damage response.</title>
        <authorList>
            <person name="Cao N."/>
            <person name="Li J.K."/>
            <person name="Rao Y.Q."/>
            <person name="Liu H."/>
            <person name="Wu J."/>
            <person name="Li B."/>
            <person name="Zhao P."/>
            <person name="Zeng L."/>
            <person name="Li J."/>
        </authorList>
    </citation>
    <scope>FUNCTION</scope>
</reference>
<name>ZDH16_MOUSE</name>
<gene>
    <name evidence="11" type="primary">Zdhhc16</name>
    <name evidence="9" type="synonym">Aph2</name>
</gene>
<proteinExistence type="evidence at protein level"/>
<accession>Q9ESG8</accession>
<accession>Q3TI22</accession>
<accession>Q3UA59</accession>
<accession>Q91XC5</accession>
<comment type="function">
    <text evidence="1 3 6 7 8">Palmitoyl acyltransferase that mediates palmitoylation of proteins such as PLN and ZDHHC6 (PubMed:26644582). Required during embryonic heart development and cardiac function, possibly by mediating palmitoylation of PLN, thereby affecting PLN phosphorylation and homooligomerization (PubMed:26644582). Also required for eye development (PubMed:26644582). Palmitoylates ZDHHC6, affecting the quaternary assembly of ZDHHC6, its localization, stability and function (By similarity). May play a role in DNA damage response (PubMed:27159997). May be involved in apoptosis regulation (PubMed:12021275). Involved in the proliferation of neural stem cells by regulating the FGF/ERK pathway (By similarity).</text>
</comment>
<comment type="catalytic activity">
    <reaction evidence="7">
        <text>L-cysteinyl-[protein] + hexadecanoyl-CoA = S-hexadecanoyl-L-cysteinyl-[protein] + CoA</text>
        <dbReference type="Rhea" id="RHEA:36683"/>
        <dbReference type="Rhea" id="RHEA-COMP:10131"/>
        <dbReference type="Rhea" id="RHEA-COMP:11032"/>
        <dbReference type="ChEBI" id="CHEBI:29950"/>
        <dbReference type="ChEBI" id="CHEBI:57287"/>
        <dbReference type="ChEBI" id="CHEBI:57379"/>
        <dbReference type="ChEBI" id="CHEBI:74151"/>
        <dbReference type="EC" id="2.3.1.225"/>
    </reaction>
</comment>
<comment type="subunit">
    <text evidence="3 6">Interacts with ABL1 (PubMed:12021275). Interacts with COPS5 (By similarity).</text>
</comment>
<comment type="subcellular location">
    <subcellularLocation>
        <location evidence="6">Endoplasmic reticulum membrane</location>
        <topology evidence="4">Multi-pass membrane protein</topology>
    </subcellularLocation>
</comment>
<comment type="tissue specificity">
    <text evidence="6">Ubiquitously expressed.</text>
</comment>
<comment type="disruption phenotype">
    <text evidence="7">Lethality one day after birth (PubMed:26644582). Pups and embryos show eye malformation and heart defects (PubMed:26644582). Mice display cardiomyopathy and cardiac defects including bradycardia (PubMed:26644582). Heart defects are characterized by thinner and enlarged ventricular walls, cardiomyocyte disarray and abnormal nucleus morphology (PubMed:26644582).</text>
</comment>
<comment type="similarity">
    <text evidence="10">Belongs to the DHHC palmitoyltransferase family.</text>
</comment>
<keyword id="KW-0012">Acyltransferase</keyword>
<keyword id="KW-0053">Apoptosis</keyword>
<keyword id="KW-0227">DNA damage</keyword>
<keyword id="KW-0256">Endoplasmic reticulum</keyword>
<keyword id="KW-0472">Membrane</keyword>
<keyword id="KW-1185">Reference proteome</keyword>
<keyword id="KW-0808">Transferase</keyword>
<keyword id="KW-0812">Transmembrane</keyword>
<keyword id="KW-1133">Transmembrane helix</keyword>